<organism>
    <name type="scientific">Saccharolobus islandicus (strain M.16.4 / Kamchatka #3)</name>
    <name type="common">Sulfolobus islandicus</name>
    <dbReference type="NCBI Taxonomy" id="426118"/>
    <lineage>
        <taxon>Archaea</taxon>
        <taxon>Thermoproteota</taxon>
        <taxon>Thermoprotei</taxon>
        <taxon>Sulfolobales</taxon>
        <taxon>Sulfolobaceae</taxon>
        <taxon>Saccharolobus</taxon>
    </lineage>
</organism>
<keyword id="KW-0560">Oxidoreductase</keyword>
<evidence type="ECO:0000255" key="1">
    <source>
        <dbReference type="HAMAP-Rule" id="MF_00712"/>
    </source>
</evidence>
<feature type="chain" id="PRO_1000212665" description="Probable glycine dehydrogenase (decarboxylating) subunit 1">
    <location>
        <begin position="1"/>
        <end position="455"/>
    </location>
</feature>
<reference key="1">
    <citation type="journal article" date="2009" name="Proc. Natl. Acad. Sci. U.S.A.">
        <title>Biogeography of the Sulfolobus islandicus pan-genome.</title>
        <authorList>
            <person name="Reno M.L."/>
            <person name="Held N.L."/>
            <person name="Fields C.J."/>
            <person name="Burke P.V."/>
            <person name="Whitaker R.J."/>
        </authorList>
    </citation>
    <scope>NUCLEOTIDE SEQUENCE [LARGE SCALE GENOMIC DNA]</scope>
    <source>
        <strain>M.16.4 / Kamchatka #3</strain>
    </source>
</reference>
<name>GCSPA_SACI6</name>
<proteinExistence type="inferred from homology"/>
<gene>
    <name evidence="1" type="primary">gcvPA</name>
    <name type="ordered locus">M164_1286</name>
</gene>
<accession>C4KH27</accession>
<sequence length="455" mass="51276">MYKHPWLPNLDLIDEMLKEIGVNSLDELFNDIPAEIKINRLLNVAKGKPLSEYEIEKEINEKVKKNVELQAPPFIGAGICPHYIPNVVKFIIGRSEFYTSYTPYQPEISQGLLQALFEYQSLMAELLDMDVVNASMYDWGSALAEAVLMANRINGKKTVLVPENANPFHKEVVRTWIGGKGIKIEEVKYDKNSGELDLEDLEKKSNIDDISAIYIQQPNFFGIFESNIEHVIDVAKHKRALSIVGVNPLSLGLIKPPGSYEADIVVGDGQELGLPLNFGGPLMGVFAVRWDMSLVRQMPGRIVGITKDTNGKMGFTLILQTREQFIKREKATSNITTNEALLAIANAVYLSLLGKEGMRELAEEIYFRSHYAAKKLTEIDNVSMPFRSDFFEEFAIRFPIEYDKISNKLKERKLQGGLKLSDYTSLFCVTEVHDKKSIDLLVSTIQEMINGVETS</sequence>
<protein>
    <recommendedName>
        <fullName evidence="1">Probable glycine dehydrogenase (decarboxylating) subunit 1</fullName>
        <ecNumber evidence="1">1.4.4.2</ecNumber>
    </recommendedName>
    <alternativeName>
        <fullName evidence="1">Glycine cleavage system P-protein subunit 1</fullName>
    </alternativeName>
    <alternativeName>
        <fullName evidence="1">Glycine decarboxylase subunit 1</fullName>
    </alternativeName>
    <alternativeName>
        <fullName evidence="1">Glycine dehydrogenase (aminomethyl-transferring) subunit 1</fullName>
    </alternativeName>
</protein>
<dbReference type="EC" id="1.4.4.2" evidence="1"/>
<dbReference type="EMBL" id="CP001402">
    <property type="protein sequence ID" value="ACR41891.1"/>
    <property type="molecule type" value="Genomic_DNA"/>
</dbReference>
<dbReference type="RefSeq" id="WP_012711309.1">
    <property type="nucleotide sequence ID" value="NC_012726.1"/>
</dbReference>
<dbReference type="SMR" id="C4KH27"/>
<dbReference type="GeneID" id="84061616"/>
<dbReference type="KEGG" id="sid:M164_1286"/>
<dbReference type="HOGENOM" id="CLU_004620_0_2_2"/>
<dbReference type="Proteomes" id="UP000001479">
    <property type="component" value="Chromosome"/>
</dbReference>
<dbReference type="GO" id="GO:0004375">
    <property type="term" value="F:glycine dehydrogenase (decarboxylating) activity"/>
    <property type="evidence" value="ECO:0007669"/>
    <property type="project" value="UniProtKB-EC"/>
</dbReference>
<dbReference type="GO" id="GO:0019464">
    <property type="term" value="P:glycine decarboxylation via glycine cleavage system"/>
    <property type="evidence" value="ECO:0007669"/>
    <property type="project" value="UniProtKB-UniRule"/>
</dbReference>
<dbReference type="GO" id="GO:0009116">
    <property type="term" value="P:nucleoside metabolic process"/>
    <property type="evidence" value="ECO:0007669"/>
    <property type="project" value="InterPro"/>
</dbReference>
<dbReference type="CDD" id="cd00613">
    <property type="entry name" value="GDC-P"/>
    <property type="match status" value="1"/>
</dbReference>
<dbReference type="Gene3D" id="3.90.1150.10">
    <property type="entry name" value="Aspartate Aminotransferase, domain 1"/>
    <property type="match status" value="1"/>
</dbReference>
<dbReference type="Gene3D" id="3.40.640.10">
    <property type="entry name" value="Type I PLP-dependent aspartate aminotransferase-like (Major domain)"/>
    <property type="match status" value="1"/>
</dbReference>
<dbReference type="HAMAP" id="MF_00712">
    <property type="entry name" value="GcvPA"/>
    <property type="match status" value="1"/>
</dbReference>
<dbReference type="InterPro" id="IPR023010">
    <property type="entry name" value="GcvPA"/>
</dbReference>
<dbReference type="InterPro" id="IPR049315">
    <property type="entry name" value="GDC-P_N"/>
</dbReference>
<dbReference type="InterPro" id="IPR020581">
    <property type="entry name" value="GDC_P"/>
</dbReference>
<dbReference type="InterPro" id="IPR015424">
    <property type="entry name" value="PyrdxlP-dep_Trfase"/>
</dbReference>
<dbReference type="InterPro" id="IPR015421">
    <property type="entry name" value="PyrdxlP-dep_Trfase_major"/>
</dbReference>
<dbReference type="InterPro" id="IPR015422">
    <property type="entry name" value="PyrdxlP-dep_Trfase_small"/>
</dbReference>
<dbReference type="NCBIfam" id="NF001696">
    <property type="entry name" value="PRK00451.1"/>
    <property type="match status" value="1"/>
</dbReference>
<dbReference type="PANTHER" id="PTHR42806">
    <property type="entry name" value="GLYCINE CLEAVAGE SYSTEM P-PROTEIN"/>
    <property type="match status" value="1"/>
</dbReference>
<dbReference type="PANTHER" id="PTHR42806:SF1">
    <property type="entry name" value="GLYCINE DEHYDROGENASE (DECARBOXYLATING)"/>
    <property type="match status" value="1"/>
</dbReference>
<dbReference type="Pfam" id="PF02347">
    <property type="entry name" value="GDC-P"/>
    <property type="match status" value="1"/>
</dbReference>
<dbReference type="PIRSF" id="PIRSF006815">
    <property type="entry name" value="GcvPA"/>
    <property type="match status" value="1"/>
</dbReference>
<dbReference type="SUPFAM" id="SSF53383">
    <property type="entry name" value="PLP-dependent transferases"/>
    <property type="match status" value="1"/>
</dbReference>
<comment type="function">
    <text evidence="1">The glycine cleavage system catalyzes the degradation of glycine. The P protein binds the alpha-amino group of glycine through its pyridoxal phosphate cofactor; CO(2) is released and the remaining methylamine moiety is then transferred to the lipoamide cofactor of the H protein.</text>
</comment>
<comment type="catalytic activity">
    <reaction evidence="1">
        <text>N(6)-[(R)-lipoyl]-L-lysyl-[glycine-cleavage complex H protein] + glycine + H(+) = N(6)-[(R)-S(8)-aminomethyldihydrolipoyl]-L-lysyl-[glycine-cleavage complex H protein] + CO2</text>
        <dbReference type="Rhea" id="RHEA:24304"/>
        <dbReference type="Rhea" id="RHEA-COMP:10494"/>
        <dbReference type="Rhea" id="RHEA-COMP:10495"/>
        <dbReference type="ChEBI" id="CHEBI:15378"/>
        <dbReference type="ChEBI" id="CHEBI:16526"/>
        <dbReference type="ChEBI" id="CHEBI:57305"/>
        <dbReference type="ChEBI" id="CHEBI:83099"/>
        <dbReference type="ChEBI" id="CHEBI:83143"/>
        <dbReference type="EC" id="1.4.4.2"/>
    </reaction>
</comment>
<comment type="subunit">
    <text evidence="1">The glycine cleavage system is composed of four proteins: P, T, L and H. In this organism, the P 'protein' is a heterodimer of two subunits.</text>
</comment>
<comment type="similarity">
    <text evidence="1">Belongs to the GcvP family. N-terminal subunit subfamily.</text>
</comment>